<accession>Q7ZW57</accession>
<accession>B7ZQE4</accession>
<accession>B7ZQF0</accession>
<accession>Q32NH5</accession>
<accession>Q7ZW52</accession>
<accession>Q7ZW53</accession>
<accession>Q7ZW54</accession>
<accession>Q7ZW55</accession>
<accession>Q7ZW56</accession>
<accession>Q7ZW58</accession>
<name>CCD89_XENLA</name>
<organism>
    <name type="scientific">Xenopus laevis</name>
    <name type="common">African clawed frog</name>
    <dbReference type="NCBI Taxonomy" id="8355"/>
    <lineage>
        <taxon>Eukaryota</taxon>
        <taxon>Metazoa</taxon>
        <taxon>Chordata</taxon>
        <taxon>Craniata</taxon>
        <taxon>Vertebrata</taxon>
        <taxon>Euteleostomi</taxon>
        <taxon>Amphibia</taxon>
        <taxon>Batrachia</taxon>
        <taxon>Anura</taxon>
        <taxon>Pipoidea</taxon>
        <taxon>Pipidae</taxon>
        <taxon>Xenopodinae</taxon>
        <taxon>Xenopus</taxon>
        <taxon>Xenopus</taxon>
    </lineage>
</organism>
<keyword id="KW-0175">Coiled coil</keyword>
<keyword id="KW-0963">Cytoplasm</keyword>
<keyword id="KW-0539">Nucleus</keyword>
<keyword id="KW-1185">Reference proteome</keyword>
<gene>
    <name evidence="1" type="primary">ccdc89</name>
    <name evidence="7" type="synonym">boip</name>
</gene>
<dbReference type="EMBL" id="AJ555186">
    <property type="protein sequence ID" value="CAD87597.1"/>
    <property type="molecule type" value="mRNA"/>
</dbReference>
<dbReference type="EMBL" id="AJ555187">
    <property type="protein sequence ID" value="CAD87598.1"/>
    <property type="molecule type" value="mRNA"/>
</dbReference>
<dbReference type="EMBL" id="AJ555188">
    <property type="protein sequence ID" value="CAD87599.1"/>
    <property type="molecule type" value="mRNA"/>
</dbReference>
<dbReference type="EMBL" id="AJ555189">
    <property type="protein sequence ID" value="CAD87600.1"/>
    <property type="molecule type" value="mRNA"/>
</dbReference>
<dbReference type="EMBL" id="AJ555190">
    <property type="protein sequence ID" value="CAD87601.1"/>
    <property type="molecule type" value="mRNA"/>
</dbReference>
<dbReference type="EMBL" id="AJ555191">
    <property type="protein sequence ID" value="CAD87602.1"/>
    <property type="molecule type" value="mRNA"/>
</dbReference>
<dbReference type="EMBL" id="AJ555192">
    <property type="protein sequence ID" value="CAD87603.1"/>
    <property type="molecule type" value="mRNA"/>
</dbReference>
<dbReference type="EMBL" id="BC108622">
    <property type="protein sequence ID" value="AAI08623.1"/>
    <property type="status" value="ALT_INIT"/>
    <property type="molecule type" value="mRNA"/>
</dbReference>
<dbReference type="EMBL" id="BC169777">
    <property type="protein sequence ID" value="AAI69777.1"/>
    <property type="molecule type" value="mRNA"/>
</dbReference>
<dbReference type="EMBL" id="BC169783">
    <property type="protein sequence ID" value="AAI69783.1"/>
    <property type="molecule type" value="mRNA"/>
</dbReference>
<dbReference type="RefSeq" id="NP_001082584.1">
    <property type="nucleotide sequence ID" value="NM_001089115.1"/>
</dbReference>
<dbReference type="SMR" id="Q7ZW57"/>
<dbReference type="BioGRID" id="99916">
    <property type="interactions" value="1"/>
</dbReference>
<dbReference type="GeneID" id="398585"/>
<dbReference type="KEGG" id="xla:398585"/>
<dbReference type="AGR" id="Xenbase:XB-GENE-5853499"/>
<dbReference type="CTD" id="398585"/>
<dbReference type="Xenbase" id="XB-GENE-5853499">
    <property type="gene designation" value="ccdc89.L"/>
</dbReference>
<dbReference type="OrthoDB" id="10020070at2759"/>
<dbReference type="Proteomes" id="UP000186698">
    <property type="component" value="Chromosome 2L"/>
</dbReference>
<dbReference type="Bgee" id="398585">
    <property type="expression patterns" value="Expressed in testis and 17 other cell types or tissues"/>
</dbReference>
<dbReference type="GO" id="GO:0005737">
    <property type="term" value="C:cytoplasm"/>
    <property type="evidence" value="ECO:0007669"/>
    <property type="project" value="UniProtKB-SubCell"/>
</dbReference>
<dbReference type="GO" id="GO:0005634">
    <property type="term" value="C:nucleus"/>
    <property type="evidence" value="ECO:0000314"/>
    <property type="project" value="MGI"/>
</dbReference>
<dbReference type="GO" id="GO:0046982">
    <property type="term" value="F:protein heterodimerization activity"/>
    <property type="evidence" value="ECO:0000353"/>
    <property type="project" value="UniProtKB"/>
</dbReference>
<dbReference type="InterPro" id="IPR043450">
    <property type="entry name" value="CCDC89-like"/>
</dbReference>
<dbReference type="PANTHER" id="PTHR34768:SF2">
    <property type="entry name" value="COILED-COIL DOMAIN CONTAINING 89"/>
    <property type="match status" value="1"/>
</dbReference>
<dbReference type="PANTHER" id="PTHR34768">
    <property type="entry name" value="COILED-COIL DOMAIN-CONTAINING PROTEIN 89"/>
    <property type="match status" value="1"/>
</dbReference>
<comment type="subunit">
    <text evidence="3">Interacts (via C-terminus) with hey1/bc8 (via Orange domain).</text>
</comment>
<comment type="subcellular location">
    <subcellularLocation>
        <location evidence="3">Cytoplasm</location>
    </subcellularLocation>
    <subcellularLocation>
        <location evidence="3">Nucleus</location>
    </subcellularLocation>
    <text evidence="3">Uniformly distributed within the cell, but becomes recruited to the nucleus upon binding to hey1/bc8.</text>
</comment>
<comment type="tissue specificity">
    <text evidence="3">In adults, expressed at varying levels in different organs including the liver and brain, with highest expression in the testis.</text>
</comment>
<comment type="developmental stage">
    <text evidence="3">Expressed both maternally and zygotically. Expressed in all embryonic stages, with expression increasing during development.</text>
</comment>
<comment type="similarity">
    <text evidence="2">Belongs to the CCDC89 family.</text>
</comment>
<comment type="sequence caution" evidence="4">
    <conflict type="erroneous initiation">
        <sequence resource="EMBL-CDS" id="AAI08623"/>
    </conflict>
</comment>
<evidence type="ECO:0000250" key="1">
    <source>
        <dbReference type="UniProtKB" id="Q8N998"/>
    </source>
</evidence>
<evidence type="ECO:0000255" key="2"/>
<evidence type="ECO:0000269" key="3">
    <source>
    </source>
</evidence>
<evidence type="ECO:0000305" key="4"/>
<evidence type="ECO:0000312" key="5">
    <source>
        <dbReference type="EMBL" id="AAI08623.1"/>
    </source>
</evidence>
<evidence type="ECO:0000312" key="6">
    <source>
        <dbReference type="EMBL" id="AAI69777.1"/>
    </source>
</evidence>
<evidence type="ECO:0000312" key="7">
    <source>
        <dbReference type="EMBL" id="CAD87598.1"/>
    </source>
</evidence>
<reference evidence="4 7" key="1">
    <citation type="journal article" date="2003" name="Dev. Dyn.">
        <title>Identification of BOIP, a novel cDNA highly expressed during spermatogenesis that encodes a protein interacting with the orange domain of the hairy-related transcription factor HRT1/Hey1 in Xenopus and mouse.</title>
        <authorList>
            <person name="Van Wayenbergh R."/>
            <person name="Taelman V."/>
            <person name="Pichon B."/>
            <person name="Fischer A."/>
            <person name="Kricha S."/>
            <person name="Gessler M."/>
            <person name="Christophe D."/>
            <person name="Bellefroid E.J."/>
        </authorList>
    </citation>
    <scope>NUCLEOTIDE SEQUENCE [MRNA]</scope>
    <scope>INTERACTION WITH HEY1</scope>
    <scope>SUBCELLULAR LOCATION</scope>
    <scope>TISSUE SPECIFICITY</scope>
    <scope>DEVELOPMENTAL STAGE</scope>
    <source>
        <tissue evidence="7">Neurula</tissue>
    </source>
</reference>
<reference evidence="6" key="2">
    <citation type="submission" date="2008-11" db="EMBL/GenBank/DDBJ databases">
        <authorList>
            <consortium name="NIH - Xenopus Gene Collection (XGC) project"/>
        </authorList>
    </citation>
    <scope>NUCLEOTIDE SEQUENCE [LARGE SCALE MRNA]</scope>
    <source>
        <tissue evidence="6">Gastrula</tissue>
        <tissue evidence="5">Testis</tissue>
    </source>
</reference>
<sequence>MPGGEGENRVGEGIQSLKQLHALPWDEKTENEMLRSRLDEQSQLICMLKQRADETQIKWQHLERVNGELERQSGEAAQRFQSERERGERLEERFAILASNHQQMIRFKDEYKQQNEELRQLCDTMRESKYPELLHRDRCIQELRDQLGDTETRLKEQEMNYGRKLDTLSAKVEQLEGEKRTGSLELGDLTHRLKVSEETRHEAQEKLARLEEIKKAEKAEADKRLEEIKKEKQELLNLCMERGRTLQDRQREAAELSVRLQEAQKSLEKAEESYQRDKAAVDADIRVSDLQRKLEDGENQFEQLRRDFEAYKKHSGDLLTKERELNSKLRHLIG</sequence>
<protein>
    <recommendedName>
        <fullName evidence="1">Coiled-coil domain-containing protein 89</fullName>
    </recommendedName>
    <alternativeName>
        <fullName evidence="7">Bc8 orange-interacting protein</fullName>
        <shortName>XBoip</shortName>
    </alternativeName>
</protein>
<proteinExistence type="evidence at protein level"/>
<feature type="chain" id="PRO_0000370204" description="Coiled-coil domain-containing protein 89">
    <location>
        <begin position="1"/>
        <end position="334"/>
    </location>
</feature>
<feature type="coiled-coil region" evidence="2">
    <location>
        <begin position="75"/>
        <end position="318"/>
    </location>
</feature>
<feature type="sequence conflict" description="In Ref. 1; CAD87599." evidence="4" ref="1">
    <original>P</original>
    <variation>Q</variation>
    <location>
        <position position="2"/>
    </location>
</feature>
<feature type="sequence conflict" description="In Ref. 1; CAD87603." evidence="4" ref="1">
    <location>
        <begin position="77"/>
        <end position="92"/>
    </location>
</feature>
<feature type="sequence conflict" description="In Ref. 1; CAD87597/CAD87600/CAD87601." evidence="4" ref="1">
    <original>Q</original>
    <variation>E</variation>
    <location>
        <position position="120"/>
    </location>
</feature>
<feature type="sequence conflict" description="In Ref. 1; CAD87598 and 2; AAI69783." evidence="4" ref="1 2">
    <original>S</original>
    <variation>K</variation>
    <location>
        <position position="169"/>
    </location>
</feature>
<feature type="sequence conflict" description="In Ref. 1; CAD87602." evidence="4" ref="1">
    <original>S</original>
    <variation>R</variation>
    <location>
        <position position="169"/>
    </location>
</feature>
<feature type="sequence conflict" description="In Ref. 1; CAD87599/CAD87603 and 2; AAI08623/AAI69777." evidence="4" ref="1 2">
    <original>G</original>
    <variation>E</variation>
    <location>
        <position position="177"/>
    </location>
</feature>
<feature type="sequence conflict" description="In Ref. 1; CAD87597/CAD87600/CAD87601/CAD87602." evidence="4" ref="1">
    <original>R</original>
    <variation>H</variation>
    <location>
        <position position="209"/>
    </location>
</feature>
<feature type="sequence conflict" description="In Ref. 1; CAD87600." evidence="4" ref="1">
    <original>E</original>
    <variation>G</variation>
    <location>
        <position position="212"/>
    </location>
</feature>
<feature type="sequence conflict" description="In Ref. 1; CAD87602 and 2; AAI69783." evidence="4" ref="1 2">
    <original>K</original>
    <variation>R</variation>
    <location>
        <position position="223"/>
    </location>
</feature>
<feature type="sequence conflict" description="In Ref. 1; CAD87599/CAD87602/CAD87603 and 2; AAI08623/AAI69777." evidence="4" ref="1 2">
    <original>D</original>
    <variation>E</variation>
    <location>
        <position position="248"/>
    </location>
</feature>
<feature type="sequence conflict" description="In Ref. 1; CAD87599/CAD87603 and 2; AAI69777." evidence="4" ref="1 2">
    <original>S</original>
    <variation>R</variation>
    <location>
        <position position="273"/>
    </location>
</feature>
<feature type="sequence conflict" description="In Ref. 1; CAD87597/CAD87600/CAD87601." evidence="4" ref="1">
    <original>A</original>
    <variation>V</variation>
    <location>
        <position position="280"/>
    </location>
</feature>